<sequence>MFDIGWSELLVIAVVLIVVVGPKDLPPMIRAFGKTMAGLRKMAGDFRTQFDEALKEADMDDVRQTISDVRNLNPTNSLRDAMNPLRQLGNEIKSDLQKATSPSDGLSSTAAPATSEPVAPLVNVPEPDMKLPDSPPAVAAAPAPVAAASVAAEKPKRARAKSIATVEAEAVAAKPKRVSRSKAVATPETTVATNASEPASPKPTVKTIAKKATVKKIAAEKSVAVADAKPAKAARTKAAKPKKDEA</sequence>
<organism>
    <name type="scientific">Agrobacterium fabrum (strain C58 / ATCC 33970)</name>
    <name type="common">Agrobacterium tumefaciens (strain C58)</name>
    <dbReference type="NCBI Taxonomy" id="176299"/>
    <lineage>
        <taxon>Bacteria</taxon>
        <taxon>Pseudomonadati</taxon>
        <taxon>Pseudomonadota</taxon>
        <taxon>Alphaproteobacteria</taxon>
        <taxon>Hyphomicrobiales</taxon>
        <taxon>Rhizobiaceae</taxon>
        <taxon>Rhizobium/Agrobacterium group</taxon>
        <taxon>Agrobacterium</taxon>
        <taxon>Agrobacterium tumefaciens complex</taxon>
    </lineage>
</organism>
<protein>
    <recommendedName>
        <fullName evidence="1">Sec-independent protein translocase protein TatB</fullName>
    </recommendedName>
</protein>
<keyword id="KW-0997">Cell inner membrane</keyword>
<keyword id="KW-1003">Cell membrane</keyword>
<keyword id="KW-0472">Membrane</keyword>
<keyword id="KW-0653">Protein transport</keyword>
<keyword id="KW-1185">Reference proteome</keyword>
<keyword id="KW-0811">Translocation</keyword>
<keyword id="KW-0812">Transmembrane</keyword>
<keyword id="KW-1133">Transmembrane helix</keyword>
<keyword id="KW-0813">Transport</keyword>
<accession>Q8UEQ0</accession>
<reference key="1">
    <citation type="journal article" date="2001" name="Science">
        <title>The genome of the natural genetic engineer Agrobacterium tumefaciens C58.</title>
        <authorList>
            <person name="Wood D.W."/>
            <person name="Setubal J.C."/>
            <person name="Kaul R."/>
            <person name="Monks D.E."/>
            <person name="Kitajima J.P."/>
            <person name="Okura V.K."/>
            <person name="Zhou Y."/>
            <person name="Chen L."/>
            <person name="Wood G.E."/>
            <person name="Almeida N.F. Jr."/>
            <person name="Woo L."/>
            <person name="Chen Y."/>
            <person name="Paulsen I.T."/>
            <person name="Eisen J.A."/>
            <person name="Karp P.D."/>
            <person name="Bovee D. Sr."/>
            <person name="Chapman P."/>
            <person name="Clendenning J."/>
            <person name="Deatherage G."/>
            <person name="Gillet W."/>
            <person name="Grant C."/>
            <person name="Kutyavin T."/>
            <person name="Levy R."/>
            <person name="Li M.-J."/>
            <person name="McClelland E."/>
            <person name="Palmieri A."/>
            <person name="Raymond C."/>
            <person name="Rouse G."/>
            <person name="Saenphimmachak C."/>
            <person name="Wu Z."/>
            <person name="Romero P."/>
            <person name="Gordon D."/>
            <person name="Zhang S."/>
            <person name="Yoo H."/>
            <person name="Tao Y."/>
            <person name="Biddle P."/>
            <person name="Jung M."/>
            <person name="Krespan W."/>
            <person name="Perry M."/>
            <person name="Gordon-Kamm B."/>
            <person name="Liao L."/>
            <person name="Kim S."/>
            <person name="Hendrick C."/>
            <person name="Zhao Z.-Y."/>
            <person name="Dolan M."/>
            <person name="Chumley F."/>
            <person name="Tingey S.V."/>
            <person name="Tomb J.-F."/>
            <person name="Gordon M.P."/>
            <person name="Olson M.V."/>
            <person name="Nester E.W."/>
        </authorList>
    </citation>
    <scope>NUCLEOTIDE SEQUENCE [LARGE SCALE GENOMIC DNA]</scope>
    <source>
        <strain>C58 / ATCC 33970</strain>
    </source>
</reference>
<reference key="2">
    <citation type="journal article" date="2001" name="Science">
        <title>Genome sequence of the plant pathogen and biotechnology agent Agrobacterium tumefaciens C58.</title>
        <authorList>
            <person name="Goodner B."/>
            <person name="Hinkle G."/>
            <person name="Gattung S."/>
            <person name="Miller N."/>
            <person name="Blanchard M."/>
            <person name="Qurollo B."/>
            <person name="Goldman B.S."/>
            <person name="Cao Y."/>
            <person name="Askenazi M."/>
            <person name="Halling C."/>
            <person name="Mullin L."/>
            <person name="Houmiel K."/>
            <person name="Gordon J."/>
            <person name="Vaudin M."/>
            <person name="Iartchouk O."/>
            <person name="Epp A."/>
            <person name="Liu F."/>
            <person name="Wollam C."/>
            <person name="Allinger M."/>
            <person name="Doughty D."/>
            <person name="Scott C."/>
            <person name="Lappas C."/>
            <person name="Markelz B."/>
            <person name="Flanagan C."/>
            <person name="Crowell C."/>
            <person name="Gurson J."/>
            <person name="Lomo C."/>
            <person name="Sear C."/>
            <person name="Strub G."/>
            <person name="Cielo C."/>
            <person name="Slater S."/>
        </authorList>
    </citation>
    <scope>NUCLEOTIDE SEQUENCE [LARGE SCALE GENOMIC DNA]</scope>
    <source>
        <strain>C58 / ATCC 33970</strain>
    </source>
</reference>
<evidence type="ECO:0000255" key="1">
    <source>
        <dbReference type="HAMAP-Rule" id="MF_00237"/>
    </source>
</evidence>
<evidence type="ECO:0000256" key="2">
    <source>
        <dbReference type="SAM" id="MobiDB-lite"/>
    </source>
</evidence>
<name>TATB_AGRFC</name>
<comment type="function">
    <text evidence="1">Part of the twin-arginine translocation (Tat) system that transports large folded proteins containing a characteristic twin-arginine motif in their signal peptide across membranes. Together with TatC, TatB is part of a receptor directly interacting with Tat signal peptides. TatB may form an oligomeric binding site that transiently accommodates folded Tat precursor proteins before their translocation.</text>
</comment>
<comment type="subunit">
    <text evidence="1">The Tat system comprises two distinct complexes: a TatABC complex, containing multiple copies of TatA, TatB and TatC subunits, and a separate TatA complex, containing only TatA subunits. Substrates initially bind to the TatABC complex, which probably triggers association of the separate TatA complex to form the active translocon.</text>
</comment>
<comment type="subcellular location">
    <subcellularLocation>
        <location evidence="1">Cell inner membrane</location>
        <topology evidence="1">Single-pass membrane protein</topology>
    </subcellularLocation>
</comment>
<comment type="similarity">
    <text evidence="1">Belongs to the TatB family.</text>
</comment>
<gene>
    <name evidence="1" type="primary">tatB</name>
    <name type="ordered locus">Atu1705</name>
    <name type="ORF">AGR_C_3133</name>
</gene>
<dbReference type="EMBL" id="AE007869">
    <property type="protein sequence ID" value="AAK87478.2"/>
    <property type="molecule type" value="Genomic_DNA"/>
</dbReference>
<dbReference type="PIR" id="AC2786">
    <property type="entry name" value="AC2786"/>
</dbReference>
<dbReference type="PIR" id="E97565">
    <property type="entry name" value="E97565"/>
</dbReference>
<dbReference type="RefSeq" id="NP_354693.2">
    <property type="nucleotide sequence ID" value="NC_003062.2"/>
</dbReference>
<dbReference type="RefSeq" id="WP_010971812.1">
    <property type="nucleotide sequence ID" value="NC_003062.2"/>
</dbReference>
<dbReference type="SMR" id="Q8UEQ0"/>
<dbReference type="STRING" id="176299.Atu1705"/>
<dbReference type="EnsemblBacteria" id="AAK87478">
    <property type="protein sequence ID" value="AAK87478"/>
    <property type="gene ID" value="Atu1705"/>
</dbReference>
<dbReference type="GeneID" id="1133743"/>
<dbReference type="KEGG" id="atu:Atu1705"/>
<dbReference type="PATRIC" id="fig|176299.10.peg.1719"/>
<dbReference type="eggNOG" id="COG1826">
    <property type="taxonomic scope" value="Bacteria"/>
</dbReference>
<dbReference type="HOGENOM" id="CLU_086034_1_3_5"/>
<dbReference type="OrthoDB" id="7206969at2"/>
<dbReference type="PhylomeDB" id="Q8UEQ0"/>
<dbReference type="Proteomes" id="UP000000813">
    <property type="component" value="Chromosome circular"/>
</dbReference>
<dbReference type="GO" id="GO:0033281">
    <property type="term" value="C:TAT protein transport complex"/>
    <property type="evidence" value="ECO:0007669"/>
    <property type="project" value="UniProtKB-UniRule"/>
</dbReference>
<dbReference type="GO" id="GO:0008320">
    <property type="term" value="F:protein transmembrane transporter activity"/>
    <property type="evidence" value="ECO:0007669"/>
    <property type="project" value="UniProtKB-UniRule"/>
</dbReference>
<dbReference type="GO" id="GO:0043953">
    <property type="term" value="P:protein transport by the Tat complex"/>
    <property type="evidence" value="ECO:0007669"/>
    <property type="project" value="UniProtKB-UniRule"/>
</dbReference>
<dbReference type="Gene3D" id="1.20.5.3310">
    <property type="match status" value="1"/>
</dbReference>
<dbReference type="HAMAP" id="MF_00237">
    <property type="entry name" value="TatB"/>
    <property type="match status" value="1"/>
</dbReference>
<dbReference type="InterPro" id="IPR003369">
    <property type="entry name" value="TatA/B/E"/>
</dbReference>
<dbReference type="InterPro" id="IPR018448">
    <property type="entry name" value="TatB"/>
</dbReference>
<dbReference type="NCBIfam" id="TIGR01410">
    <property type="entry name" value="tatB"/>
    <property type="match status" value="1"/>
</dbReference>
<dbReference type="PANTHER" id="PTHR33162">
    <property type="entry name" value="SEC-INDEPENDENT PROTEIN TRANSLOCASE PROTEIN TATA, CHLOROPLASTIC"/>
    <property type="match status" value="1"/>
</dbReference>
<dbReference type="PANTHER" id="PTHR33162:SF1">
    <property type="entry name" value="SEC-INDEPENDENT PROTEIN TRANSLOCASE PROTEIN TATA, CHLOROPLASTIC"/>
    <property type="match status" value="1"/>
</dbReference>
<dbReference type="Pfam" id="PF02416">
    <property type="entry name" value="TatA_B_E"/>
    <property type="match status" value="1"/>
</dbReference>
<dbReference type="PRINTS" id="PR01506">
    <property type="entry name" value="TATBPROTEIN"/>
</dbReference>
<proteinExistence type="inferred from homology"/>
<feature type="chain" id="PRO_0000192648" description="Sec-independent protein translocase protein TatB">
    <location>
        <begin position="1"/>
        <end position="246"/>
    </location>
</feature>
<feature type="transmembrane region" description="Helical" evidence="1">
    <location>
        <begin position="1"/>
        <end position="21"/>
    </location>
</feature>
<feature type="region of interest" description="Disordered" evidence="2">
    <location>
        <begin position="94"/>
        <end position="122"/>
    </location>
</feature>
<feature type="region of interest" description="Disordered" evidence="2">
    <location>
        <begin position="179"/>
        <end position="204"/>
    </location>
</feature>
<feature type="region of interest" description="Disordered" evidence="2">
    <location>
        <begin position="225"/>
        <end position="246"/>
    </location>
</feature>
<feature type="compositionally biased region" description="Polar residues" evidence="2">
    <location>
        <begin position="97"/>
        <end position="112"/>
    </location>
</feature>
<feature type="compositionally biased region" description="Polar residues" evidence="2">
    <location>
        <begin position="187"/>
        <end position="197"/>
    </location>
</feature>